<evidence type="ECO:0000255" key="1">
    <source>
        <dbReference type="HAMAP-Rule" id="MF_01309"/>
    </source>
</evidence>
<evidence type="ECO:0000305" key="2"/>
<dbReference type="EMBL" id="CP000560">
    <property type="protein sequence ID" value="ABS72570.1"/>
    <property type="molecule type" value="Genomic_DNA"/>
</dbReference>
<dbReference type="RefSeq" id="WP_003156476.1">
    <property type="nucleotide sequence ID" value="NC_009725.2"/>
</dbReference>
<dbReference type="SMR" id="A7Z0P4"/>
<dbReference type="GeneID" id="93079286"/>
<dbReference type="KEGG" id="bay:RBAM_001470"/>
<dbReference type="HOGENOM" id="CLU_058591_0_2_9"/>
<dbReference type="Proteomes" id="UP000001120">
    <property type="component" value="Chromosome"/>
</dbReference>
<dbReference type="GO" id="GO:0022627">
    <property type="term" value="C:cytosolic small ribosomal subunit"/>
    <property type="evidence" value="ECO:0007669"/>
    <property type="project" value="TreeGrafter"/>
</dbReference>
<dbReference type="GO" id="GO:0003729">
    <property type="term" value="F:mRNA binding"/>
    <property type="evidence" value="ECO:0007669"/>
    <property type="project" value="UniProtKB-UniRule"/>
</dbReference>
<dbReference type="GO" id="GO:0019843">
    <property type="term" value="F:rRNA binding"/>
    <property type="evidence" value="ECO:0007669"/>
    <property type="project" value="UniProtKB-UniRule"/>
</dbReference>
<dbReference type="GO" id="GO:0003735">
    <property type="term" value="F:structural constituent of ribosome"/>
    <property type="evidence" value="ECO:0007669"/>
    <property type="project" value="InterPro"/>
</dbReference>
<dbReference type="GO" id="GO:0006412">
    <property type="term" value="P:translation"/>
    <property type="evidence" value="ECO:0007669"/>
    <property type="project" value="UniProtKB-UniRule"/>
</dbReference>
<dbReference type="CDD" id="cd02412">
    <property type="entry name" value="KH-II_30S_S3"/>
    <property type="match status" value="1"/>
</dbReference>
<dbReference type="FunFam" id="3.30.1140.32:FF:000001">
    <property type="entry name" value="30S ribosomal protein S3"/>
    <property type="match status" value="1"/>
</dbReference>
<dbReference type="FunFam" id="3.30.300.20:FF:000001">
    <property type="entry name" value="30S ribosomal protein S3"/>
    <property type="match status" value="1"/>
</dbReference>
<dbReference type="Gene3D" id="3.30.300.20">
    <property type="match status" value="1"/>
</dbReference>
<dbReference type="Gene3D" id="3.30.1140.32">
    <property type="entry name" value="Ribosomal protein S3, C-terminal domain"/>
    <property type="match status" value="1"/>
</dbReference>
<dbReference type="HAMAP" id="MF_01309_B">
    <property type="entry name" value="Ribosomal_uS3_B"/>
    <property type="match status" value="1"/>
</dbReference>
<dbReference type="InterPro" id="IPR004087">
    <property type="entry name" value="KH_dom"/>
</dbReference>
<dbReference type="InterPro" id="IPR015946">
    <property type="entry name" value="KH_dom-like_a/b"/>
</dbReference>
<dbReference type="InterPro" id="IPR004044">
    <property type="entry name" value="KH_dom_type_2"/>
</dbReference>
<dbReference type="InterPro" id="IPR009019">
    <property type="entry name" value="KH_sf_prok-type"/>
</dbReference>
<dbReference type="InterPro" id="IPR036419">
    <property type="entry name" value="Ribosomal_S3_C_sf"/>
</dbReference>
<dbReference type="InterPro" id="IPR005704">
    <property type="entry name" value="Ribosomal_uS3_bac-typ"/>
</dbReference>
<dbReference type="InterPro" id="IPR001351">
    <property type="entry name" value="Ribosomal_uS3_C"/>
</dbReference>
<dbReference type="InterPro" id="IPR018280">
    <property type="entry name" value="Ribosomal_uS3_CS"/>
</dbReference>
<dbReference type="NCBIfam" id="TIGR01009">
    <property type="entry name" value="rpsC_bact"/>
    <property type="match status" value="1"/>
</dbReference>
<dbReference type="PANTHER" id="PTHR11760">
    <property type="entry name" value="30S/40S RIBOSOMAL PROTEIN S3"/>
    <property type="match status" value="1"/>
</dbReference>
<dbReference type="PANTHER" id="PTHR11760:SF19">
    <property type="entry name" value="SMALL RIBOSOMAL SUBUNIT PROTEIN US3C"/>
    <property type="match status" value="1"/>
</dbReference>
<dbReference type="Pfam" id="PF07650">
    <property type="entry name" value="KH_2"/>
    <property type="match status" value="1"/>
</dbReference>
<dbReference type="Pfam" id="PF00189">
    <property type="entry name" value="Ribosomal_S3_C"/>
    <property type="match status" value="1"/>
</dbReference>
<dbReference type="SMART" id="SM00322">
    <property type="entry name" value="KH"/>
    <property type="match status" value="1"/>
</dbReference>
<dbReference type="SUPFAM" id="SSF54814">
    <property type="entry name" value="Prokaryotic type KH domain (KH-domain type II)"/>
    <property type="match status" value="1"/>
</dbReference>
<dbReference type="SUPFAM" id="SSF54821">
    <property type="entry name" value="Ribosomal protein S3 C-terminal domain"/>
    <property type="match status" value="1"/>
</dbReference>
<dbReference type="PROSITE" id="PS50823">
    <property type="entry name" value="KH_TYPE_2"/>
    <property type="match status" value="1"/>
</dbReference>
<dbReference type="PROSITE" id="PS00548">
    <property type="entry name" value="RIBOSOMAL_S3"/>
    <property type="match status" value="1"/>
</dbReference>
<feature type="chain" id="PRO_0000323287" description="Small ribosomal subunit protein uS3">
    <location>
        <begin position="1"/>
        <end position="218"/>
    </location>
</feature>
<feature type="domain" description="KH type-2" evidence="1">
    <location>
        <begin position="38"/>
        <end position="106"/>
    </location>
</feature>
<proteinExistence type="inferred from homology"/>
<keyword id="KW-0687">Ribonucleoprotein</keyword>
<keyword id="KW-0689">Ribosomal protein</keyword>
<keyword id="KW-0694">RNA-binding</keyword>
<keyword id="KW-0699">rRNA-binding</keyword>
<gene>
    <name evidence="1" type="primary">rpsC</name>
    <name type="ordered locus">RBAM_001470</name>
</gene>
<organism>
    <name type="scientific">Bacillus velezensis (strain DSM 23117 / BGSC 10A6 / LMG 26770 / FZB42)</name>
    <name type="common">Bacillus amyloliquefaciens subsp. plantarum</name>
    <dbReference type="NCBI Taxonomy" id="326423"/>
    <lineage>
        <taxon>Bacteria</taxon>
        <taxon>Bacillati</taxon>
        <taxon>Bacillota</taxon>
        <taxon>Bacilli</taxon>
        <taxon>Bacillales</taxon>
        <taxon>Bacillaceae</taxon>
        <taxon>Bacillus</taxon>
        <taxon>Bacillus amyloliquefaciens group</taxon>
    </lineage>
</organism>
<reference key="1">
    <citation type="journal article" date="2007" name="Nat. Biotechnol.">
        <title>Comparative analysis of the complete genome sequence of the plant growth-promoting bacterium Bacillus amyloliquefaciens FZB42.</title>
        <authorList>
            <person name="Chen X.H."/>
            <person name="Koumoutsi A."/>
            <person name="Scholz R."/>
            <person name="Eisenreich A."/>
            <person name="Schneider K."/>
            <person name="Heinemeyer I."/>
            <person name="Morgenstern B."/>
            <person name="Voss B."/>
            <person name="Hess W.R."/>
            <person name="Reva O."/>
            <person name="Junge H."/>
            <person name="Voigt B."/>
            <person name="Jungblut P.R."/>
            <person name="Vater J."/>
            <person name="Suessmuth R."/>
            <person name="Liesegang H."/>
            <person name="Strittmatter A."/>
            <person name="Gottschalk G."/>
            <person name="Borriss R."/>
        </authorList>
    </citation>
    <scope>NUCLEOTIDE SEQUENCE [LARGE SCALE GENOMIC DNA]</scope>
    <source>
        <strain>DSM 23117 / BGSC 10A6 / LMG 26770 / FZB42</strain>
    </source>
</reference>
<comment type="function">
    <text evidence="1">Binds the lower part of the 30S subunit head. Binds mRNA in the 70S ribosome, positioning it for translation.</text>
</comment>
<comment type="subunit">
    <text evidence="1">Part of the 30S ribosomal subunit. Forms a tight complex with proteins S10 and S14.</text>
</comment>
<comment type="similarity">
    <text evidence="1">Belongs to the universal ribosomal protein uS3 family.</text>
</comment>
<name>RS3_BACVZ</name>
<sequence length="218" mass="24308">MGQKVNPVGLRIGVIRDWESKWYAGKDYADFLHEDLKIREFISKRLSDASVSKVEIERAANRVNITIHTAKPGMVIGKGGSEVEALRKALNSLTGKRVHINILEIKRADLDAQLVADNIARQLENRISFRRAQKQQIQRTMRAGAQGVKTMVSGRLGGADIARSEYYSEGTVPLHTLRADIDYATSEADTTYGKLGVKVWIYRGEVLPTKKKTEEGGK</sequence>
<protein>
    <recommendedName>
        <fullName evidence="1">Small ribosomal subunit protein uS3</fullName>
    </recommendedName>
    <alternativeName>
        <fullName evidence="2">30S ribosomal protein S3</fullName>
    </alternativeName>
</protein>
<accession>A7Z0P4</accession>